<reference key="1">
    <citation type="journal article" date="2004" name="Nat. Genet.">
        <title>Complete sequencing and characterization of 21,243 full-length human cDNAs.</title>
        <authorList>
            <person name="Ota T."/>
            <person name="Suzuki Y."/>
            <person name="Nishikawa T."/>
            <person name="Otsuki T."/>
            <person name="Sugiyama T."/>
            <person name="Irie R."/>
            <person name="Wakamatsu A."/>
            <person name="Hayashi K."/>
            <person name="Sato H."/>
            <person name="Nagai K."/>
            <person name="Kimura K."/>
            <person name="Makita H."/>
            <person name="Sekine M."/>
            <person name="Obayashi M."/>
            <person name="Nishi T."/>
            <person name="Shibahara T."/>
            <person name="Tanaka T."/>
            <person name="Ishii S."/>
            <person name="Yamamoto J."/>
            <person name="Saito K."/>
            <person name="Kawai Y."/>
            <person name="Isono Y."/>
            <person name="Nakamura Y."/>
            <person name="Nagahari K."/>
            <person name="Murakami K."/>
            <person name="Yasuda T."/>
            <person name="Iwayanagi T."/>
            <person name="Wagatsuma M."/>
            <person name="Shiratori A."/>
            <person name="Sudo H."/>
            <person name="Hosoiri T."/>
            <person name="Kaku Y."/>
            <person name="Kodaira H."/>
            <person name="Kondo H."/>
            <person name="Sugawara M."/>
            <person name="Takahashi M."/>
            <person name="Kanda K."/>
            <person name="Yokoi T."/>
            <person name="Furuya T."/>
            <person name="Kikkawa E."/>
            <person name="Omura Y."/>
            <person name="Abe K."/>
            <person name="Kamihara K."/>
            <person name="Katsuta N."/>
            <person name="Sato K."/>
            <person name="Tanikawa M."/>
            <person name="Yamazaki M."/>
            <person name="Ninomiya K."/>
            <person name="Ishibashi T."/>
            <person name="Yamashita H."/>
            <person name="Murakawa K."/>
            <person name="Fujimori K."/>
            <person name="Tanai H."/>
            <person name="Kimata M."/>
            <person name="Watanabe M."/>
            <person name="Hiraoka S."/>
            <person name="Chiba Y."/>
            <person name="Ishida S."/>
            <person name="Ono Y."/>
            <person name="Takiguchi S."/>
            <person name="Watanabe S."/>
            <person name="Yosida M."/>
            <person name="Hotuta T."/>
            <person name="Kusano J."/>
            <person name="Kanehori K."/>
            <person name="Takahashi-Fujii A."/>
            <person name="Hara H."/>
            <person name="Tanase T.-O."/>
            <person name="Nomura Y."/>
            <person name="Togiya S."/>
            <person name="Komai F."/>
            <person name="Hara R."/>
            <person name="Takeuchi K."/>
            <person name="Arita M."/>
            <person name="Imose N."/>
            <person name="Musashino K."/>
            <person name="Yuuki H."/>
            <person name="Oshima A."/>
            <person name="Sasaki N."/>
            <person name="Aotsuka S."/>
            <person name="Yoshikawa Y."/>
            <person name="Matsunawa H."/>
            <person name="Ichihara T."/>
            <person name="Shiohata N."/>
            <person name="Sano S."/>
            <person name="Moriya S."/>
            <person name="Momiyama H."/>
            <person name="Satoh N."/>
            <person name="Takami S."/>
            <person name="Terashima Y."/>
            <person name="Suzuki O."/>
            <person name="Nakagawa S."/>
            <person name="Senoh A."/>
            <person name="Mizoguchi H."/>
            <person name="Goto Y."/>
            <person name="Shimizu F."/>
            <person name="Wakebe H."/>
            <person name="Hishigaki H."/>
            <person name="Watanabe T."/>
            <person name="Sugiyama A."/>
            <person name="Takemoto M."/>
            <person name="Kawakami B."/>
            <person name="Yamazaki M."/>
            <person name="Watanabe K."/>
            <person name="Kumagai A."/>
            <person name="Itakura S."/>
            <person name="Fukuzumi Y."/>
            <person name="Fujimori Y."/>
            <person name="Komiyama M."/>
            <person name="Tashiro H."/>
            <person name="Tanigami A."/>
            <person name="Fujiwara T."/>
            <person name="Ono T."/>
            <person name="Yamada K."/>
            <person name="Fujii Y."/>
            <person name="Ozaki K."/>
            <person name="Hirao M."/>
            <person name="Ohmori Y."/>
            <person name="Kawabata A."/>
            <person name="Hikiji T."/>
            <person name="Kobatake N."/>
            <person name="Inagaki H."/>
            <person name="Ikema Y."/>
            <person name="Okamoto S."/>
            <person name="Okitani R."/>
            <person name="Kawakami T."/>
            <person name="Noguchi S."/>
            <person name="Itoh T."/>
            <person name="Shigeta K."/>
            <person name="Senba T."/>
            <person name="Matsumura K."/>
            <person name="Nakajima Y."/>
            <person name="Mizuno T."/>
            <person name="Morinaga M."/>
            <person name="Sasaki M."/>
            <person name="Togashi T."/>
            <person name="Oyama M."/>
            <person name="Hata H."/>
            <person name="Watanabe M."/>
            <person name="Komatsu T."/>
            <person name="Mizushima-Sugano J."/>
            <person name="Satoh T."/>
            <person name="Shirai Y."/>
            <person name="Takahashi Y."/>
            <person name="Nakagawa K."/>
            <person name="Okumura K."/>
            <person name="Nagase T."/>
            <person name="Nomura N."/>
            <person name="Kikuchi H."/>
            <person name="Masuho Y."/>
            <person name="Yamashita R."/>
            <person name="Nakai K."/>
            <person name="Yada T."/>
            <person name="Nakamura Y."/>
            <person name="Ohara O."/>
            <person name="Isogai T."/>
            <person name="Sugano S."/>
        </authorList>
    </citation>
    <scope>NUCLEOTIDE SEQUENCE [LARGE SCALE MRNA] (ISOFORM 4)</scope>
    <source>
        <tissue>Placenta</tissue>
        <tissue>Teratocarcinoma</tissue>
    </source>
</reference>
<reference key="2">
    <citation type="journal article" date="2005" name="Nature">
        <title>DNA sequence and analysis of human chromosome 18.</title>
        <authorList>
            <person name="Nusbaum C."/>
            <person name="Zody M.C."/>
            <person name="Borowsky M.L."/>
            <person name="Kamal M."/>
            <person name="Kodira C.D."/>
            <person name="Taylor T.D."/>
            <person name="Whittaker C.A."/>
            <person name="Chang J.L."/>
            <person name="Cuomo C.A."/>
            <person name="Dewar K."/>
            <person name="FitzGerald M.G."/>
            <person name="Yang X."/>
            <person name="Abouelleil A."/>
            <person name="Allen N.R."/>
            <person name="Anderson S."/>
            <person name="Bloom T."/>
            <person name="Bugalter B."/>
            <person name="Butler J."/>
            <person name="Cook A."/>
            <person name="DeCaprio D."/>
            <person name="Engels R."/>
            <person name="Garber M."/>
            <person name="Gnirke A."/>
            <person name="Hafez N."/>
            <person name="Hall J.L."/>
            <person name="Norman C.H."/>
            <person name="Itoh T."/>
            <person name="Jaffe D.B."/>
            <person name="Kuroki Y."/>
            <person name="Lehoczky J."/>
            <person name="Lui A."/>
            <person name="Macdonald P."/>
            <person name="Mauceli E."/>
            <person name="Mikkelsen T.S."/>
            <person name="Naylor J.W."/>
            <person name="Nicol R."/>
            <person name="Nguyen C."/>
            <person name="Noguchi H."/>
            <person name="O'Leary S.B."/>
            <person name="Piqani B."/>
            <person name="Smith C.L."/>
            <person name="Talamas J.A."/>
            <person name="Topham K."/>
            <person name="Totoki Y."/>
            <person name="Toyoda A."/>
            <person name="Wain H.M."/>
            <person name="Young S.K."/>
            <person name="Zeng Q."/>
            <person name="Zimmer A.R."/>
            <person name="Fujiyama A."/>
            <person name="Hattori M."/>
            <person name="Birren B.W."/>
            <person name="Sakaki Y."/>
            <person name="Lander E.S."/>
        </authorList>
    </citation>
    <scope>NUCLEOTIDE SEQUENCE [LARGE SCALE GENOMIC DNA]</scope>
</reference>
<reference key="3">
    <citation type="journal article" date="2004" name="Genome Res.">
        <title>The status, quality, and expansion of the NIH full-length cDNA project: the Mammalian Gene Collection (MGC).</title>
        <authorList>
            <consortium name="The MGC Project Team"/>
        </authorList>
    </citation>
    <scope>NUCLEOTIDE SEQUENCE [LARGE SCALE MRNA] OF 1-1102 (ISOFORM 3)</scope>
</reference>
<reference key="4">
    <citation type="journal article" date="2000" name="DNA Res.">
        <title>Prediction of the coding sequences of unidentified human genes. XIX. The complete sequences of 100 new cDNA clones from brain which code for large proteins in vitro.</title>
        <authorList>
            <person name="Nagase T."/>
            <person name="Kikuno R."/>
            <person name="Hattori A."/>
            <person name="Kondo Y."/>
            <person name="Okumura K."/>
            <person name="Ohara O."/>
        </authorList>
    </citation>
    <scope>NUCLEOTIDE SEQUENCE [LARGE SCALE MRNA] OF 1-728 (ISOFORM 1)</scope>
    <source>
        <tissue>Brain</tissue>
    </source>
</reference>
<reference key="5">
    <citation type="journal article" date="2017" name="Am. J. Hum. Genet.">
        <title>Exome-wide association study identifies GREB1L mutations in congenital kidney malformations.</title>
        <authorList>
            <person name="Sanna-Cherchi S."/>
            <person name="Khan K."/>
            <person name="Westland R."/>
            <person name="Krithivasan P."/>
            <person name="Fievet L."/>
            <person name="Rasouly H.M."/>
            <person name="Ionita-Laza I."/>
            <person name="Capone V.P."/>
            <person name="Fasel D.A."/>
            <person name="Kiryluk K."/>
            <person name="Kamalakaran S."/>
            <person name="Bodria M."/>
            <person name="Otto E.A."/>
            <person name="Sampson M.G."/>
            <person name="Gillies C.E."/>
            <person name="Vega-Warner V."/>
            <person name="Vukojevic K."/>
            <person name="Pediaditakis I."/>
            <person name="Makar G.S."/>
            <person name="Mitrotti A."/>
            <person name="Verbitsky M."/>
            <person name="Martino J."/>
            <person name="Liu Q."/>
            <person name="Na Y.J."/>
            <person name="Goj V."/>
            <person name="Ardissino G."/>
            <person name="Gigante M."/>
            <person name="Gesualdo L."/>
            <person name="Janezcko M."/>
            <person name="Zaniew M."/>
            <person name="Mendelsohn C.L."/>
            <person name="Shril S."/>
            <person name="Hildebrandt F."/>
            <person name="van Wijk J.A.E."/>
            <person name="Arapovic A."/>
            <person name="Saraga M."/>
            <person name="Allegri L."/>
            <person name="Izzi C."/>
            <person name="Scolari F."/>
            <person name="Tasic V."/>
            <person name="Ghiggeri G.M."/>
            <person name="Latos-Bielenska A."/>
            <person name="Materna-Kiryluk A."/>
            <person name="Mane S."/>
            <person name="Goldstein D.B."/>
            <person name="Lifton R.P."/>
            <person name="Katsanis N."/>
            <person name="Davis E.E."/>
            <person name="Gharavi A.G."/>
        </authorList>
    </citation>
    <scope>INVOLVEMENT IN RHDA3</scope>
    <scope>VARIANTS RHDA3 13-ARG--VAL-1923 DEL; HIS-128; VAL-273; GLY-497; GLN-761; PRO-1066; 1099-GLN--VAL-1923 DEL; ALA-1549; 1560-TYR--VAL-1923 DEL; PRO-1567; ILE-1615; THR-1655; CYS-1664; MET-1690 AND HIS-1884</scope>
    <scope>CHARACTERIZATION OF VARIANTS RHDA3 VAL-926; PRO-1066; PRO-1567; THR-1655 AND MET-1690</scope>
    <scope>CHARACTERIZATION OF VARIANTS GLN-241 AND VAL-926</scope>
</reference>
<reference key="6">
    <citation type="journal article" date="2017" name="Am. J. Hum. Genet.">
        <title>Mutations in GREB1L cause bilateral kidney agenesis in humans and mice.</title>
        <authorList>
            <person name="De Tomasi L."/>
            <person name="David P."/>
            <person name="Humbert C."/>
            <person name="Silbermann F."/>
            <person name="Arrondel C."/>
            <person name="Tores F."/>
            <person name="Fouquet S."/>
            <person name="Desgrange A."/>
            <person name="Niel O."/>
            <person name="Bole-Feysot C."/>
            <person name="Nitschke P."/>
            <person name="Roume J."/>
            <person name="Cordier M.P."/>
            <person name="Pietrement C."/>
            <person name="Isidor B."/>
            <person name="Khau Van Kien P."/>
            <person name="Gonzales M."/>
            <person name="Saint-Frison M.H."/>
            <person name="Martinovic J."/>
            <person name="Novo R."/>
            <person name="Piard J."/>
            <person name="Cabrol C."/>
            <person name="Verma I.C."/>
            <person name="Puri R."/>
            <person name="Journel H."/>
            <person name="Aziza J."/>
            <person name="Gavard L."/>
            <person name="Said-Menthon M.H."/>
            <person name="Heidet L."/>
            <person name="Saunier S."/>
            <person name="Jeanpierre C."/>
        </authorList>
    </citation>
    <scope>INVOLVEMENT IN RHDA3</scope>
    <scope>FUNCTION</scope>
    <scope>VARIANTS RHDA3 LEU-192; GLN-328; 594-GLU--VAL-1923 DEL; ARG-605; PHE-716; CYS-751; HIS-751; 976-GLN--VAL-1923 DEL; THR-1502; VAL-1509; ARG-1536; SER-1558; VAL-1576 AND ASN-1775</scope>
    <scope>TISSUE SPECIFICITY</scope>
</reference>
<reference key="7">
    <citation type="journal article" date="2017" name="Genetics">
        <title>A gene implicated in activation of retinoic acid receptor targets is a novel renal agenesis gene in humans.</title>
        <authorList>
            <person name="Brophy P.D."/>
            <person name="Rasmussen M."/>
            <person name="Parida M."/>
            <person name="Bonde G."/>
            <person name="Darbro B.W."/>
            <person name="Hong X."/>
            <person name="Clarke J.C."/>
            <person name="Peterson K.A."/>
            <person name="Denegre J."/>
            <person name="Schneider M."/>
            <person name="Sussman C.R."/>
            <person name="Sunde L."/>
            <person name="Lildballe D.L."/>
            <person name="Hertz J.M."/>
            <person name="Cornell R.A."/>
            <person name="Murray S.A."/>
            <person name="Manak J.R."/>
        </authorList>
    </citation>
    <scope>INVOLVEMENT IN RHDA3</scope>
    <scope>VARIANT RHDA3 ARG-1793</scope>
</reference>
<reference key="8">
    <citation type="journal article" date="2018" name="Hum. Genet.">
        <title>De novo variants in GREB1L are associated with non-syndromic inner ear malformations and deafness.</title>
        <authorList>
            <person name="Schrauwen I."/>
            <person name="Kari E."/>
            <person name="Mattox J."/>
            <person name="Llaci L."/>
            <person name="Smeeton J."/>
            <person name="Naymik M."/>
            <person name="Raible D.W."/>
            <person name="Knowles J.A."/>
            <person name="Crump J.G."/>
            <person name="Huentelman M.J."/>
            <person name="Friedman R.A."/>
        </authorList>
    </citation>
    <scope>INVOLVEMENT IN DFNA80</scope>
    <scope>TISSUE SPECIFICITY</scope>
    <scope>VARIANT DFNA80 328-ARG--VAL-1923 DEL</scope>
</reference>
<reference key="9">
    <citation type="journal article" date="2020" name="Genes (Basel)">
        <title>Autosomal dominantly inherited GREB1L variants in individuals with profound sensorineural hearing impairment.</title>
        <authorList>
            <person name="Schrauwen I."/>
            <person name="Liaqat K."/>
            <person name="Schatteman I."/>
            <person name="Bharadwaj T."/>
            <person name="Nasir A."/>
            <person name="Acharya A."/>
            <person name="Ahmad W."/>
            <person name="Van Camp G."/>
            <person name="Leal S.M."/>
        </authorList>
    </citation>
    <scope>VARIANTS DFNA80 ILE-116 AND SER-283</scope>
</reference>
<sequence length="1923" mass="214354">MGNSYAGQLKSARFEEALHNSIEASLRCSSVVPRPIFSQLYLDPDQHPFSSADVKPKVEDLDKDLVNRYTQNGSLDFSNNLTVNEMEDDEDDEEMSDSNSPPIPYSQKPAPEGSCTTDGFCQAGKDLRLVSLCMEQIDIPAGFLLVGAKSPNLPEHILVCAVDKRFLPDDHGKNALLGFSGNCIGCGERGFRYFTEFSNHINLKLTTQPKKQKHLKYYLVRSSQGVLSKGPLICWKECRSRQSSASCHSIKPSSSVSSTVTPENGTTNGYKSGFTQTDAANGNSSHGGKGSASSSTPAHTGNYSLSPRPSYASGDQATMFISGPPKKRHRGWYPGSPLPQPGLVVPVPTVRPLSRTEPLLSAPVPQTPLTGILQPRPIPAGETVIVPENLLSNSGVRPVILIGYGTLPYFYGNVGDIVVSPLLVNCYKIPQLENKDLEKLGLTGSQFLSVENMILLTIQYLVRLGPDQVPLREEFEQIMLKAMQEFTLRERALQIGAQCVPVSPGQLPWLARLIASVSQDLVHVVVTQNSLAEGISETLRTLSEMRHYQRLPDYVVVICASKIRGNEFCVVVLGQHQSRALAESMLTTSEFLKEISYELITGKVSFLASHFKTTSLGDDLDKLLEKMQQRRGDSVVTPFDGDLNECVSPQEAAAMIPTQNLDLDNETFHIYQPQLTVARKLLSQVCAIADSGSQSLDLGHFSKVDFIIIVPRSEVLVQQTLQRIRQSGVLVDLGLEENGTAHQRAEKYVVRLDNEIQTKFEVFMRRVKQNPYTLFVLVHDNSHVELTSVISGSLSHSEPSHGLADRVINCREVLEAFNLLVLQVSSFPYTLQTQQSRISSSNEVHWIQLDTGEDVGCEEKLYFGLSEYSKSLQWGITSPLLRCDETFEKMVNTLLERYPRLHSMVVRCYLLIQQYSEALMALTTMASLRDHSTPETLSIMDDLISSPGKNKSGRGHMLIIRVPSVQLAMLAKERLQEVRDKLGLQYRFEIILGNPATELSVATHFVARLKSWRGNEPEEWIPRTYQDLDGLPCIVILTGKDPLGETFPRSLKYCDLRLIDSSYLTRTALEQEVGLACCYVSKEVIRGPTVALDLSGKEQERAAVSENDSDELLIDLERPQSNSSAVTGTSGSIMENGVSSSSTADKSQKQSLTPSFQSPATSLGLDEGVSASSAGAGAGETLKQECDSLGPQMASSTTSKPSSSSSGPRTLPWPGQPIRGCRGPQAALPPVVILSKAAYSLLGSQKSGKLPSSSSLLPHADVAWVSSLRPLLNKDMSSEEQSLYYRQWTLARQHHADYSNQLDPASGTRNFHPRRLLLTGPPQVGKTGSYLQFLRILFRMLIRLLEVDVYDEEEINTDHNESSEVSQSEGEPWPDIESFSKMPFDVSVHDPKYSLMSLVYTEKLAGVKQEVIKESKVEEPRKRETVSIMLTKYAAYNTFHHCEQCRQYMDFTSASQMSDSTLHAFTFSSSMLGEEVQLYFIIPKSKESHFVFSKQGKHLESMRLPLVSDKNLNAVKSPIFTPSSGRHEHGLLNLFHAMEGISHLHLLVVKEYEMPLYRKYWPNHIMLVLPGMFNNAGVGAARFLIKELSYHNLELERNRLEELGIKRQCVWPFIVMMDDSCVLWNIHSVQEPSSQPMEVGVSSKNVSLKTVLQHIEATPKIVHYAILGIQKWSSKLTSQSLKAPFSRCHVHDFILLNTDLTQNVQYDFNRYFCEDADFNLRTNSSGLLICRFNNFSLMKKHVQVGGQRDFIIKPKIMVSESLAPILPLQYICAPDSEHTLLAAPAQFLLEKFLQHASYKLFPKAIHNFRSPVLAIDCYLNIGPEVAICYISSRPHSSNVNCEGVFFSGLLLYLCDSFVGADLKKFKFLKGATLCVICQDRSSLRQTIVRLELEDEWQFRLRDEFQTANSSDDKPLYFLTGRHV</sequence>
<proteinExistence type="evidence at protein level"/>
<feature type="chain" id="PRO_0000320946" description="GREB1-like protein">
    <location>
        <begin position="1"/>
        <end position="1923"/>
    </location>
</feature>
<feature type="transmembrane region" description="Helical" evidence="1">
    <location>
        <begin position="1843"/>
        <end position="1862"/>
    </location>
</feature>
<feature type="region of interest" description="Disordered" evidence="2">
    <location>
        <begin position="87"/>
        <end position="111"/>
    </location>
</feature>
<feature type="region of interest" description="Disordered" evidence="2">
    <location>
        <begin position="246"/>
        <end position="326"/>
    </location>
</feature>
<feature type="region of interest" description="Disordered" evidence="2">
    <location>
        <begin position="1101"/>
        <end position="1222"/>
    </location>
</feature>
<feature type="compositionally biased region" description="Acidic residues" evidence="2">
    <location>
        <begin position="87"/>
        <end position="96"/>
    </location>
</feature>
<feature type="compositionally biased region" description="Low complexity" evidence="2">
    <location>
        <begin position="252"/>
        <end position="262"/>
    </location>
</feature>
<feature type="compositionally biased region" description="Polar residues" evidence="2">
    <location>
        <begin position="263"/>
        <end position="278"/>
    </location>
</feature>
<feature type="compositionally biased region" description="Polar residues" evidence="2">
    <location>
        <begin position="296"/>
        <end position="307"/>
    </location>
</feature>
<feature type="compositionally biased region" description="Polar residues" evidence="2">
    <location>
        <begin position="1119"/>
        <end position="1161"/>
    </location>
</feature>
<feature type="compositionally biased region" description="Low complexity" evidence="2">
    <location>
        <begin position="1195"/>
        <end position="1206"/>
    </location>
</feature>
<feature type="splice variant" id="VSP_031762" description="In isoform 3." evidence="9">
    <location>
        <begin position="466"/>
        <end position="574"/>
    </location>
</feature>
<feature type="splice variant" id="VSP_031764" description="In isoform 4." evidence="8">
    <original>VLVDLGLEENGTAHQRAEK</original>
    <variation>SSPGSHIAFSYVLFISCNL</variation>
    <location>
        <begin position="729"/>
        <end position="747"/>
    </location>
</feature>
<feature type="splice variant" id="VSP_031765" description="In isoform 4." evidence="8">
    <location>
        <begin position="748"/>
        <end position="1923"/>
    </location>
</feature>
<feature type="sequence variant" id="VAR_080091" description="In RHDA3." evidence="4">
    <location>
        <begin position="13"/>
        <end position="1923"/>
    </location>
</feature>
<feature type="sequence variant" id="VAR_085591" description="In DFNA80; uncertain significance." evidence="7">
    <original>T</original>
    <variation>I</variation>
    <location>
        <position position="116"/>
    </location>
</feature>
<feature type="sequence variant" id="VAR_080092" description="In RHDA3." evidence="4">
    <original>R</original>
    <variation>H</variation>
    <location>
        <position position="128"/>
    </location>
</feature>
<feature type="sequence variant" id="VAR_080093" description="In RHDA3." evidence="5">
    <original>R</original>
    <variation>L</variation>
    <location>
        <position position="192"/>
    </location>
</feature>
<feature type="sequence variant" id="VAR_080094" description="Able to rescue renal hypoplasia in zebrafish morphants; dbSNP:rs147048716." evidence="4">
    <original>R</original>
    <variation>Q</variation>
    <location>
        <position position="241"/>
    </location>
</feature>
<feature type="sequence variant" id="VAR_080095" description="In RHDA3." evidence="4">
    <original>G</original>
    <variation>V</variation>
    <location>
        <position position="273"/>
    </location>
</feature>
<feature type="sequence variant" id="VAR_085592" description="In DFNA80; uncertain significance." evidence="7">
    <original>N</original>
    <variation>S</variation>
    <location>
        <position position="283"/>
    </location>
</feature>
<feature type="sequence variant" id="VAR_085593" description="In DFNA80." evidence="6">
    <location>
        <begin position="328"/>
        <end position="1923"/>
    </location>
</feature>
<feature type="sequence variant" id="VAR_080096" description="In RHDA3; dbSNP:rs1311814599." evidence="5">
    <original>R</original>
    <variation>Q</variation>
    <location>
        <position position="328"/>
    </location>
</feature>
<feature type="sequence variant" id="VAR_080097" description="In RHDA3." evidence="4">
    <original>A</original>
    <variation>G</variation>
    <location>
        <position position="497"/>
    </location>
</feature>
<feature type="sequence variant" id="VAR_080098" description="In RHDA3." evidence="5">
    <location>
        <begin position="594"/>
        <end position="1923"/>
    </location>
</feature>
<feature type="sequence variant" id="VAR_080099" description="In RHDA3." evidence="5">
    <original>S</original>
    <variation>R</variation>
    <location>
        <position position="605"/>
    </location>
</feature>
<feature type="sequence variant" id="VAR_080100" description="In RHDA3." evidence="5">
    <original>L</original>
    <variation>F</variation>
    <location>
        <position position="716"/>
    </location>
</feature>
<feature type="sequence variant" id="VAR_080101" description="In RHDA3; dbSNP:rs1555654020." evidence="5">
    <original>R</original>
    <variation>C</variation>
    <location>
        <position position="751"/>
    </location>
</feature>
<feature type="sequence variant" id="VAR_080102" description="In RHDA3; dbSNP:rs1343579561." evidence="5">
    <original>R</original>
    <variation>H</variation>
    <location>
        <position position="751"/>
    </location>
</feature>
<feature type="sequence variant" id="VAR_080103" description="In RHDA3; dbSNP:rs1465443065." evidence="4">
    <original>E</original>
    <variation>Q</variation>
    <location>
        <position position="761"/>
    </location>
</feature>
<feature type="sequence variant" id="VAR_080104" description="Able to rescue renal hypoplasia in zebrafish morphants; dbSNP:rs569900756." evidence="4">
    <original>A</original>
    <variation>V</variation>
    <location>
        <position position="926"/>
    </location>
</feature>
<feature type="sequence variant" id="VAR_080105" description="In RHDA3." evidence="5">
    <location>
        <begin position="976"/>
        <end position="1923"/>
    </location>
</feature>
<feature type="sequence variant" id="VAR_080106" description="In RHDA3; probable loss of function; does not rescue renal hypoplasia in zebrafish morphants; dbSNP:rs766987038." evidence="4">
    <original>R</original>
    <variation>P</variation>
    <location>
        <position position="1066"/>
    </location>
</feature>
<feature type="sequence variant" id="VAR_080107" description="In RHDA3." evidence="4">
    <location>
        <begin position="1099"/>
        <end position="1923"/>
    </location>
</feature>
<feature type="sequence variant" id="VAR_080108" description="In RHDA3." evidence="5">
    <original>M</original>
    <variation>T</variation>
    <location>
        <position position="1502"/>
    </location>
</feature>
<feature type="sequence variant" id="VAR_080109" description="In RHDA3; dbSNP:rs1336205837." evidence="5">
    <original>D</original>
    <variation>V</variation>
    <location>
        <position position="1509"/>
    </location>
</feature>
<feature type="sequence variant" id="VAR_080110" description="In RHDA3; dbSNP:rs1555662027." evidence="5">
    <original>H</original>
    <variation>R</variation>
    <location>
        <position position="1536"/>
    </location>
</feature>
<feature type="sequence variant" id="VAR_080111" description="In RHDA3." evidence="4">
    <original>V</original>
    <variation>A</variation>
    <location>
        <position position="1549"/>
    </location>
</feature>
<feature type="sequence variant" id="VAR_080112" description="In RHDA3; dbSNP:rs1045574508." evidence="5">
    <original>R</original>
    <variation>S</variation>
    <location>
        <position position="1558"/>
    </location>
</feature>
<feature type="sequence variant" id="VAR_080113" description="In RHDA3." evidence="4">
    <location>
        <begin position="1560"/>
        <end position="1923"/>
    </location>
</feature>
<feature type="sequence variant" id="VAR_080114" description="In RHDA3; probable loss of function; does not rescue renal hypoplasia in zebrafish morphants; dbSNP:rs1555662061." evidence="4">
    <original>L</original>
    <variation>P</variation>
    <location>
        <position position="1567"/>
    </location>
</feature>
<feature type="sequence variant" id="VAR_080115" description="In RHDA3." evidence="5">
    <original>A</original>
    <variation>V</variation>
    <location>
        <position position="1576"/>
    </location>
</feature>
<feature type="sequence variant" id="VAR_080116" description="In RHDA3; dbSNP:rs1409376788." evidence="4">
    <original>V</original>
    <variation>I</variation>
    <location>
        <position position="1615"/>
    </location>
</feature>
<feature type="sequence variant" id="VAR_080117" description="In RHDA3; probable loss of function; does not rescue renal hypoplasia in zebrafish morphants." evidence="4">
    <original>I</original>
    <variation>T</variation>
    <location>
        <position position="1655"/>
    </location>
</feature>
<feature type="sequence variant" id="VAR_080118" description="In RHDA3." evidence="4">
    <original>Y</original>
    <variation>C</variation>
    <location>
        <position position="1664"/>
    </location>
</feature>
<feature type="sequence variant" id="VAR_080119" description="In RHDA3; probable loss of function; does not rescue renal hypoplasia in zebrafish morphants; dbSNP:rs1555663997." evidence="4">
    <original>V</original>
    <variation>M</variation>
    <location>
        <position position="1690"/>
    </location>
</feature>
<feature type="sequence variant" id="VAR_080120" description="In RHDA3." evidence="5">
    <original>D</original>
    <variation>N</variation>
    <location>
        <position position="1775"/>
    </location>
</feature>
<feature type="sequence variant" id="VAR_080121" description="In RHDA3; dbSNP:rs1555664772." evidence="3">
    <original>L</original>
    <variation>R</variation>
    <location>
        <position position="1793"/>
    </location>
</feature>
<feature type="sequence variant" id="VAR_080122" description="In RHDA3; dbSNP:rs1372640211." evidence="4">
    <original>R</original>
    <variation>H</variation>
    <location>
        <position position="1884"/>
    </location>
</feature>
<feature type="sequence conflict" description="In Ref. 3; AAI25018." evidence="10" ref="3">
    <original>S</original>
    <variation>F</variation>
    <location>
        <position position="254"/>
    </location>
</feature>
<feature type="sequence conflict" description="In Ref. 3; AAI25018." evidence="10" ref="3">
    <original>S</original>
    <variation>V</variation>
    <location>
        <position position="257"/>
    </location>
</feature>
<name>GRB1L_HUMAN</name>
<organism>
    <name type="scientific">Homo sapiens</name>
    <name type="common">Human</name>
    <dbReference type="NCBI Taxonomy" id="9606"/>
    <lineage>
        <taxon>Eukaryota</taxon>
        <taxon>Metazoa</taxon>
        <taxon>Chordata</taxon>
        <taxon>Craniata</taxon>
        <taxon>Vertebrata</taxon>
        <taxon>Euteleostomi</taxon>
        <taxon>Mammalia</taxon>
        <taxon>Eutheria</taxon>
        <taxon>Euarchontoglires</taxon>
        <taxon>Primates</taxon>
        <taxon>Haplorrhini</taxon>
        <taxon>Catarrhini</taxon>
        <taxon>Hominidae</taxon>
        <taxon>Homo</taxon>
    </lineage>
</organism>
<evidence type="ECO:0000255" key="1"/>
<evidence type="ECO:0000256" key="2">
    <source>
        <dbReference type="SAM" id="MobiDB-lite"/>
    </source>
</evidence>
<evidence type="ECO:0000269" key="3">
    <source>
    </source>
</evidence>
<evidence type="ECO:0000269" key="4">
    <source>
    </source>
</evidence>
<evidence type="ECO:0000269" key="5">
    <source>
    </source>
</evidence>
<evidence type="ECO:0000269" key="6">
    <source>
    </source>
</evidence>
<evidence type="ECO:0000269" key="7">
    <source>
    </source>
</evidence>
<evidence type="ECO:0000303" key="8">
    <source>
    </source>
</evidence>
<evidence type="ECO:0000303" key="9">
    <source>
    </source>
</evidence>
<evidence type="ECO:0000305" key="10"/>
<keyword id="KW-0025">Alternative splicing</keyword>
<keyword id="KW-0209">Deafness</keyword>
<keyword id="KW-0217">Developmental protein</keyword>
<keyword id="KW-0225">Disease variant</keyword>
<keyword id="KW-0472">Membrane</keyword>
<keyword id="KW-1010">Non-syndromic deafness</keyword>
<keyword id="KW-1267">Proteomics identification</keyword>
<keyword id="KW-1185">Reference proteome</keyword>
<keyword id="KW-0812">Transmembrane</keyword>
<keyword id="KW-1133">Transmembrane helix</keyword>
<accession>Q9C091</accession>
<accession>A4QN17</accession>
<accession>Q9H8F1</accession>
<comment type="function">
    <text evidence="5">Plays a major role in early metanephros and genital development.</text>
</comment>
<comment type="subcellular location">
    <subcellularLocation>
        <location evidence="1">Membrane</location>
        <topology evidence="1">Single-pass membrane protein</topology>
    </subcellularLocation>
</comment>
<comment type="alternative products">
    <event type="alternative splicing"/>
    <isoform>
        <id>Q9C091-1</id>
        <name>1</name>
        <sequence type="displayed"/>
    </isoform>
    <isoform>
        <id>Q9C091-3</id>
        <name>3</name>
        <sequence type="described" ref="VSP_031762"/>
    </isoform>
    <isoform>
        <id>Q9C091-4</id>
        <name>4</name>
        <sequence type="described" ref="VSP_031764 VSP_031765"/>
    </isoform>
</comment>
<comment type="tissue specificity">
    <text evidence="5 6">Widely expressed, with prominent expression in the cochlea (PubMed:29955957). Expressed at high levels in fetal kidney (PubMed:29100091). In adult tissues, highest levels in vagina, cervix and epididymis (PubMed:29100091).</text>
</comment>
<comment type="disease" evidence="3 4 5">
    <disease id="DI-05149">
        <name>Renal hypodysplasia/aplasia 3</name>
        <acronym>RHDA3</acronym>
        <description>A severe, autosomal dominant disease encompassing a spectrum of kidney development defects. Clinical manifestations are highly variable and include bilateral or unilateral renal agenesis, renal aplasia, hypoplasia, (cystic) dysplasia, severe obstructive uropathy, and vesicoureteral reflux. Bilateral renal agenesis is almost invariably fatal in utero or in the perinatal period. Unilateral renal agenesis can lead to future health issues including end-stage renal disease.</description>
        <dbReference type="MIM" id="617805"/>
    </disease>
    <text>The disease is caused by variants affecting the gene represented in this entry.</text>
</comment>
<comment type="disease" evidence="6 7">
    <disease id="DI-06082">
        <name>Deafness, autosomal dominant, 80</name>
        <acronym>DFNA80</acronym>
        <description>A form of non-syndromic, sensorineural hearing loss. Sensorineural hearing loss results from damage to the neural receptors of the inner ear, the nerve pathways to the brain, or the area of the brain that receives sound information. DFNA80 is characterized by severe inner ear malformations, bilateral cochlear aplasia and absent eighth cranial nerve.</description>
        <dbReference type="MIM" id="619274"/>
    </disease>
    <text>The disease is caused by variants affecting the gene represented in this entry.</text>
</comment>
<comment type="similarity">
    <text evidence="10">Belongs to the GREB1 family.</text>
</comment>
<comment type="sequence caution" evidence="10">
    <conflict type="frameshift">
        <sequence resource="EMBL-CDS" id="AAI25018"/>
    </conflict>
</comment>
<comment type="sequence caution" evidence="10">
    <conflict type="erroneous translation">
        <sequence resource="EMBL-CDS" id="BAB14666"/>
    </conflict>
    <text>Wrong choice of CDS.</text>
</comment>
<comment type="sequence caution" evidence="10">
    <conflict type="frameshift">
        <sequence resource="EMBL-CDS" id="BAB14666"/>
    </conflict>
</comment>
<comment type="sequence caution" evidence="10">
    <conflict type="erroneous initiation">
        <sequence resource="EMBL-CDS" id="BAB21863"/>
    </conflict>
    <text>Extended N-terminus.</text>
</comment>
<comment type="sequence caution" evidence="10">
    <conflict type="miscellaneous discrepancy">
        <sequence resource="EMBL-CDS" id="BAB21863"/>
    </conflict>
    <text>Probable cloning artifact. Spurious priming from an intronic poly-A tract.</text>
</comment>
<gene>
    <name type="primary">GREB1L</name>
    <name type="synonym">C18orf6</name>
    <name type="synonym">KIAA1772</name>
</gene>
<protein>
    <recommendedName>
        <fullName>GREB1-like protein</fullName>
    </recommendedName>
    <alternativeName>
        <fullName>Growth regulation by estrogen in breast cancer 1-like protein</fullName>
    </alternativeName>
</protein>
<dbReference type="EMBL" id="AK023749">
    <property type="protein sequence ID" value="BAB14666.1"/>
    <property type="status" value="ALT_SEQ"/>
    <property type="molecule type" value="mRNA"/>
</dbReference>
<dbReference type="EMBL" id="AK309723">
    <property type="status" value="NOT_ANNOTATED_CDS"/>
    <property type="molecule type" value="mRNA"/>
</dbReference>
<dbReference type="EMBL" id="AC011774">
    <property type="status" value="NOT_ANNOTATED_CDS"/>
    <property type="molecule type" value="Genomic_DNA"/>
</dbReference>
<dbReference type="EMBL" id="AC015878">
    <property type="status" value="NOT_ANNOTATED_CDS"/>
    <property type="molecule type" value="Genomic_DNA"/>
</dbReference>
<dbReference type="EMBL" id="BC125017">
    <property type="protein sequence ID" value="AAI25018.1"/>
    <property type="status" value="ALT_FRAME"/>
    <property type="molecule type" value="mRNA"/>
</dbReference>
<dbReference type="EMBL" id="AB051559">
    <property type="protein sequence ID" value="BAB21863.1"/>
    <property type="status" value="ALT_SEQ"/>
    <property type="molecule type" value="mRNA"/>
</dbReference>
<dbReference type="CCDS" id="CCDS45836.1">
    <molecule id="Q9C091-1"/>
</dbReference>
<dbReference type="CCDS" id="CCDS92443.1">
    <molecule id="Q9C091-3"/>
</dbReference>
<dbReference type="RefSeq" id="NP_001136438.1">
    <molecule id="Q9C091-1"/>
    <property type="nucleotide sequence ID" value="NM_001142966.3"/>
</dbReference>
<dbReference type="RefSeq" id="NP_001397797.1">
    <molecule id="Q9C091-3"/>
    <property type="nucleotide sequence ID" value="NM_001410868.1"/>
</dbReference>
<dbReference type="BioGRID" id="123059">
    <property type="interactions" value="15"/>
</dbReference>
<dbReference type="FunCoup" id="Q9C091">
    <property type="interactions" value="132"/>
</dbReference>
<dbReference type="IntAct" id="Q9C091">
    <property type="interactions" value="11"/>
</dbReference>
<dbReference type="MINT" id="Q9C091"/>
<dbReference type="STRING" id="9606.ENSP00000464162"/>
<dbReference type="CarbonylDB" id="Q9C091"/>
<dbReference type="GlyGen" id="Q9C091">
    <property type="glycosylation" value="2 sites, 1 O-linked glycan (1 site)"/>
</dbReference>
<dbReference type="iPTMnet" id="Q9C091"/>
<dbReference type="PhosphoSitePlus" id="Q9C091"/>
<dbReference type="BioMuta" id="GREB1L"/>
<dbReference type="DMDM" id="172046226"/>
<dbReference type="jPOST" id="Q9C091"/>
<dbReference type="MassIVE" id="Q9C091"/>
<dbReference type="PaxDb" id="9606-ENSP00000464162"/>
<dbReference type="PeptideAtlas" id="Q9C091"/>
<dbReference type="ProteomicsDB" id="79965">
    <molecule id="Q9C091-1"/>
</dbReference>
<dbReference type="ProteomicsDB" id="79966">
    <molecule id="Q9C091-3"/>
</dbReference>
<dbReference type="ProteomicsDB" id="79967">
    <molecule id="Q9C091-4"/>
</dbReference>
<dbReference type="Pumba" id="Q9C091"/>
<dbReference type="Antibodypedia" id="70466">
    <property type="antibodies" value="12 antibodies from 6 providers"/>
</dbReference>
<dbReference type="DNASU" id="80000"/>
<dbReference type="Ensembl" id="ENST00000269218.10">
    <molecule id="Q9C091-3"/>
    <property type="protein sequence ID" value="ENSP00000269218.6"/>
    <property type="gene ID" value="ENSG00000141449.16"/>
</dbReference>
<dbReference type="Ensembl" id="ENST00000424526.7">
    <molecule id="Q9C091-1"/>
    <property type="protein sequence ID" value="ENSP00000412060.1"/>
    <property type="gene ID" value="ENSG00000141449.16"/>
</dbReference>
<dbReference type="Ensembl" id="ENST00000580732.6">
    <molecule id="Q9C091-1"/>
    <property type="protein sequence ID" value="ENSP00000464162.1"/>
    <property type="gene ID" value="ENSG00000141449.16"/>
</dbReference>
<dbReference type="GeneID" id="80000"/>
<dbReference type="KEGG" id="hsa:80000"/>
<dbReference type="MANE-Select" id="ENST00000424526.7">
    <property type="protein sequence ID" value="ENSP00000412060.1"/>
    <property type="RefSeq nucleotide sequence ID" value="NM_001142966.3"/>
    <property type="RefSeq protein sequence ID" value="NP_001136438.1"/>
</dbReference>
<dbReference type="UCSC" id="uc010xam.2">
    <molecule id="Q9C091-1"/>
    <property type="organism name" value="human"/>
</dbReference>
<dbReference type="AGR" id="HGNC:31042"/>
<dbReference type="CTD" id="80000"/>
<dbReference type="DisGeNET" id="80000"/>
<dbReference type="GeneCards" id="GREB1L"/>
<dbReference type="HGNC" id="HGNC:31042">
    <property type="gene designation" value="GREB1L"/>
</dbReference>
<dbReference type="HPA" id="ENSG00000141449">
    <property type="expression patterns" value="Tissue enhanced (skeletal)"/>
</dbReference>
<dbReference type="MalaCards" id="GREB1L"/>
<dbReference type="MIM" id="617782">
    <property type="type" value="gene"/>
</dbReference>
<dbReference type="MIM" id="617805">
    <property type="type" value="phenotype"/>
</dbReference>
<dbReference type="MIM" id="619274">
    <property type="type" value="phenotype"/>
</dbReference>
<dbReference type="neXtProt" id="NX_Q9C091"/>
<dbReference type="OpenTargets" id="ENSG00000141449"/>
<dbReference type="Orphanet" id="1848">
    <property type="disease" value="Renal agenesis, bilateral"/>
</dbReference>
<dbReference type="Orphanet" id="93100">
    <property type="disease" value="Renal agenesis, unilateral"/>
</dbReference>
<dbReference type="PharmGKB" id="PA165429012"/>
<dbReference type="VEuPathDB" id="HostDB:ENSG00000141449"/>
<dbReference type="eggNOG" id="ENOG502QQXD">
    <property type="taxonomic scope" value="Eukaryota"/>
</dbReference>
<dbReference type="GeneTree" id="ENSGT00390000008041"/>
<dbReference type="HOGENOM" id="CLU_237163_0_0_1"/>
<dbReference type="InParanoid" id="Q9C091"/>
<dbReference type="OMA" id="CHQYMEF"/>
<dbReference type="OrthoDB" id="9989163at2759"/>
<dbReference type="PAN-GO" id="Q9C091">
    <property type="GO annotations" value="2 GO annotations based on evolutionary models"/>
</dbReference>
<dbReference type="PhylomeDB" id="Q9C091"/>
<dbReference type="TreeFam" id="TF329531"/>
<dbReference type="PathwayCommons" id="Q9C091"/>
<dbReference type="SignaLink" id="Q9C091"/>
<dbReference type="BioGRID-ORCS" id="80000">
    <property type="hits" value="20 hits in 1153 CRISPR screens"/>
</dbReference>
<dbReference type="ChiTaRS" id="GREB1L">
    <property type="organism name" value="human"/>
</dbReference>
<dbReference type="GenomeRNAi" id="80000"/>
<dbReference type="Pharos" id="Q9C091">
    <property type="development level" value="Tdark"/>
</dbReference>
<dbReference type="PRO" id="PR:Q9C091"/>
<dbReference type="Proteomes" id="UP000005640">
    <property type="component" value="Chromosome 18"/>
</dbReference>
<dbReference type="RNAct" id="Q9C091">
    <property type="molecule type" value="protein"/>
</dbReference>
<dbReference type="Bgee" id="ENSG00000141449">
    <property type="expression patterns" value="Expressed in buccal mucosa cell and 121 other cell types or tissues"/>
</dbReference>
<dbReference type="ExpressionAtlas" id="Q9C091">
    <property type="expression patterns" value="baseline and differential"/>
</dbReference>
<dbReference type="GO" id="GO:0016020">
    <property type="term" value="C:membrane"/>
    <property type="evidence" value="ECO:0007669"/>
    <property type="project" value="UniProtKB-SubCell"/>
</dbReference>
<dbReference type="GO" id="GO:0001658">
    <property type="term" value="P:branching involved in ureteric bud morphogenesis"/>
    <property type="evidence" value="ECO:0007669"/>
    <property type="project" value="Ensembl"/>
</dbReference>
<dbReference type="GO" id="GO:0055007">
    <property type="term" value="P:cardiac muscle cell differentiation"/>
    <property type="evidence" value="ECO:0007669"/>
    <property type="project" value="Ensembl"/>
</dbReference>
<dbReference type="GO" id="GO:0003231">
    <property type="term" value="P:cardiac ventricle development"/>
    <property type="evidence" value="ECO:0007669"/>
    <property type="project" value="Ensembl"/>
</dbReference>
<dbReference type="GO" id="GO:0035050">
    <property type="term" value="P:embryonic heart tube development"/>
    <property type="evidence" value="ECO:0007669"/>
    <property type="project" value="Ensembl"/>
</dbReference>
<dbReference type="GO" id="GO:0001822">
    <property type="term" value="P:kidney development"/>
    <property type="evidence" value="ECO:0000314"/>
    <property type="project" value="MGI"/>
</dbReference>
<dbReference type="GO" id="GO:0030539">
    <property type="term" value="P:male genitalia development"/>
    <property type="evidence" value="ECO:0007669"/>
    <property type="project" value="Ensembl"/>
</dbReference>
<dbReference type="GO" id="GO:0072177">
    <property type="term" value="P:mesonephric duct development"/>
    <property type="evidence" value="ECO:0007669"/>
    <property type="project" value="Ensembl"/>
</dbReference>
<dbReference type="GO" id="GO:0001656">
    <property type="term" value="P:metanephros development"/>
    <property type="evidence" value="ECO:0007669"/>
    <property type="project" value="Ensembl"/>
</dbReference>
<dbReference type="GO" id="GO:0002009">
    <property type="term" value="P:morphogenesis of an epithelium"/>
    <property type="evidence" value="ECO:0000318"/>
    <property type="project" value="GO_Central"/>
</dbReference>
<dbReference type="GO" id="GO:0003151">
    <property type="term" value="P:outflow tract morphogenesis"/>
    <property type="evidence" value="ECO:0007669"/>
    <property type="project" value="Ensembl"/>
</dbReference>
<dbReference type="GO" id="GO:0061205">
    <property type="term" value="P:paramesonephric duct development"/>
    <property type="evidence" value="ECO:0007669"/>
    <property type="project" value="Ensembl"/>
</dbReference>
<dbReference type="GO" id="GO:0048384">
    <property type="term" value="P:retinoic acid receptor signaling pathway"/>
    <property type="evidence" value="ECO:0007669"/>
    <property type="project" value="Ensembl"/>
</dbReference>
<dbReference type="GO" id="GO:0042254">
    <property type="term" value="P:ribosome biogenesis"/>
    <property type="evidence" value="ECO:0007669"/>
    <property type="project" value="Ensembl"/>
</dbReference>
<dbReference type="GO" id="GO:0060065">
    <property type="term" value="P:uterus development"/>
    <property type="evidence" value="ECO:0007669"/>
    <property type="project" value="Ensembl"/>
</dbReference>
<dbReference type="InterPro" id="IPR028422">
    <property type="entry name" value="GREB1"/>
</dbReference>
<dbReference type="InterPro" id="IPR048659">
    <property type="entry name" value="GREB1-like_2nd"/>
</dbReference>
<dbReference type="InterPro" id="IPR046927">
    <property type="entry name" value="GREB1-like_C"/>
</dbReference>
<dbReference type="InterPro" id="IPR048657">
    <property type="entry name" value="GREB1-like_cpSF2"/>
</dbReference>
<dbReference type="InterPro" id="IPR046926">
    <property type="entry name" value="GREB1_N"/>
</dbReference>
<dbReference type="InterPro" id="IPR049100">
    <property type="entry name" value="TAGT"/>
</dbReference>
<dbReference type="PANTHER" id="PTHR15720:SF12">
    <property type="entry name" value="GREB1-LIKE PROTEIN"/>
    <property type="match status" value="1"/>
</dbReference>
<dbReference type="PANTHER" id="PTHR15720">
    <property type="entry name" value="GREB1-RELATED"/>
    <property type="match status" value="1"/>
</dbReference>
<dbReference type="Pfam" id="PF20692">
    <property type="entry name" value="cpSF2-GREB1"/>
    <property type="match status" value="1"/>
</dbReference>
<dbReference type="Pfam" id="PF20688">
    <property type="entry name" value="GREB1_2nd"/>
    <property type="match status" value="1"/>
</dbReference>
<dbReference type="Pfam" id="PF20267">
    <property type="entry name" value="GREB1_C"/>
    <property type="match status" value="1"/>
</dbReference>
<dbReference type="Pfam" id="PF15782">
    <property type="entry name" value="GREB1_N"/>
    <property type="match status" value="1"/>
</dbReference>
<dbReference type="Pfam" id="PF20691">
    <property type="entry name" value="TAGT"/>
    <property type="match status" value="1"/>
</dbReference>